<organism>
    <name type="scientific">Cereibacter sphaeroides (strain ATCC 17029 / ATH 2.4.9)</name>
    <name type="common">Rhodobacter sphaeroides</name>
    <dbReference type="NCBI Taxonomy" id="349101"/>
    <lineage>
        <taxon>Bacteria</taxon>
        <taxon>Pseudomonadati</taxon>
        <taxon>Pseudomonadota</taxon>
        <taxon>Alphaproteobacteria</taxon>
        <taxon>Rhodobacterales</taxon>
        <taxon>Paracoccaceae</taxon>
        <taxon>Cereibacter</taxon>
    </lineage>
</organism>
<gene>
    <name evidence="1" type="primary">rpiA</name>
    <name type="ordered locus">Rsph17029_2003</name>
</gene>
<comment type="function">
    <text evidence="1">Catalyzes the reversible conversion of ribose-5-phosphate to ribulose 5-phosphate.</text>
</comment>
<comment type="catalytic activity">
    <reaction evidence="1">
        <text>aldehydo-D-ribose 5-phosphate = D-ribulose 5-phosphate</text>
        <dbReference type="Rhea" id="RHEA:14657"/>
        <dbReference type="ChEBI" id="CHEBI:58121"/>
        <dbReference type="ChEBI" id="CHEBI:58273"/>
        <dbReference type="EC" id="5.3.1.6"/>
    </reaction>
</comment>
<comment type="pathway">
    <text evidence="1">Carbohydrate degradation; pentose phosphate pathway; D-ribose 5-phosphate from D-ribulose 5-phosphate (non-oxidative stage): step 1/1.</text>
</comment>
<comment type="subunit">
    <text evidence="1">Homodimer.</text>
</comment>
<comment type="similarity">
    <text evidence="1">Belongs to the ribose 5-phosphate isomerase family.</text>
</comment>
<proteinExistence type="inferred from homology"/>
<keyword id="KW-0413">Isomerase</keyword>
<sequence>MPAELSPIDTAKFAAARRAVDLVQDGMKLGLGTGSTAAWMVRCLAERVREEGLRVQGVPTSTRTAELARALGIQVVTLDEAKWLDLTIDGADEFDADFNLIKGGGAALLQEKIVATASDRMVVIADAAKEVAHLGAFPLPVEVIPFGWQSTKMLIEETLEGMDVLGREVTLRLSGDAPLLTDEKNYILDLHLKRIGEPRQLGLALNQIAGVVENGLFIDICDTVVVGHGDGRVSLRDLQSGQAEEGCIDMDRARNIFADLGD</sequence>
<feature type="chain" id="PRO_1000016979" description="Ribose-5-phosphate isomerase A">
    <location>
        <begin position="1"/>
        <end position="262"/>
    </location>
</feature>
<feature type="active site" description="Proton acceptor" evidence="1">
    <location>
        <position position="111"/>
    </location>
</feature>
<feature type="binding site" evidence="1">
    <location>
        <begin position="33"/>
        <end position="36"/>
    </location>
    <ligand>
        <name>substrate</name>
    </ligand>
</feature>
<feature type="binding site" evidence="1">
    <location>
        <begin position="89"/>
        <end position="92"/>
    </location>
    <ligand>
        <name>substrate</name>
    </ligand>
</feature>
<feature type="binding site" evidence="1">
    <location>
        <begin position="102"/>
        <end position="105"/>
    </location>
    <ligand>
        <name>substrate</name>
    </ligand>
</feature>
<feature type="binding site" evidence="1">
    <location>
        <position position="129"/>
    </location>
    <ligand>
        <name>substrate</name>
    </ligand>
</feature>
<accession>A3PL91</accession>
<evidence type="ECO:0000255" key="1">
    <source>
        <dbReference type="HAMAP-Rule" id="MF_00170"/>
    </source>
</evidence>
<protein>
    <recommendedName>
        <fullName evidence="1">Ribose-5-phosphate isomerase A</fullName>
        <ecNumber evidence="1">5.3.1.6</ecNumber>
    </recommendedName>
    <alternativeName>
        <fullName evidence="1">Phosphoriboisomerase A</fullName>
        <shortName evidence="1">PRI</shortName>
    </alternativeName>
</protein>
<reference key="1">
    <citation type="submission" date="2007-02" db="EMBL/GenBank/DDBJ databases">
        <title>Complete sequence of chromosome 1 of Rhodobacter sphaeroides ATCC 17029.</title>
        <authorList>
            <person name="Copeland A."/>
            <person name="Lucas S."/>
            <person name="Lapidus A."/>
            <person name="Barry K."/>
            <person name="Detter J.C."/>
            <person name="Glavina del Rio T."/>
            <person name="Hammon N."/>
            <person name="Israni S."/>
            <person name="Dalin E."/>
            <person name="Tice H."/>
            <person name="Pitluck S."/>
            <person name="Kiss H."/>
            <person name="Brettin T."/>
            <person name="Bruce D."/>
            <person name="Han C."/>
            <person name="Tapia R."/>
            <person name="Gilna P."/>
            <person name="Schmutz J."/>
            <person name="Larimer F."/>
            <person name="Land M."/>
            <person name="Hauser L."/>
            <person name="Kyrpides N."/>
            <person name="Mikhailova N."/>
            <person name="Richardson P."/>
            <person name="Mackenzie C."/>
            <person name="Choudhary M."/>
            <person name="Donohue T.J."/>
            <person name="Kaplan S."/>
        </authorList>
    </citation>
    <scope>NUCLEOTIDE SEQUENCE [LARGE SCALE GENOMIC DNA]</scope>
    <source>
        <strain>ATCC 17029 / ATH 2.4.9</strain>
    </source>
</reference>
<name>RPIA_CERS1</name>
<dbReference type="EC" id="5.3.1.6" evidence="1"/>
<dbReference type="EMBL" id="CP000577">
    <property type="protein sequence ID" value="ABN77107.1"/>
    <property type="molecule type" value="Genomic_DNA"/>
</dbReference>
<dbReference type="RefSeq" id="WP_011841373.1">
    <property type="nucleotide sequence ID" value="NC_009049.1"/>
</dbReference>
<dbReference type="SMR" id="A3PL91"/>
<dbReference type="KEGG" id="rsh:Rsph17029_2003"/>
<dbReference type="HOGENOM" id="CLU_056590_1_0_5"/>
<dbReference type="UniPathway" id="UPA00115">
    <property type="reaction ID" value="UER00412"/>
</dbReference>
<dbReference type="GO" id="GO:0005829">
    <property type="term" value="C:cytosol"/>
    <property type="evidence" value="ECO:0007669"/>
    <property type="project" value="TreeGrafter"/>
</dbReference>
<dbReference type="GO" id="GO:0004751">
    <property type="term" value="F:ribose-5-phosphate isomerase activity"/>
    <property type="evidence" value="ECO:0007669"/>
    <property type="project" value="UniProtKB-UniRule"/>
</dbReference>
<dbReference type="GO" id="GO:0006014">
    <property type="term" value="P:D-ribose metabolic process"/>
    <property type="evidence" value="ECO:0007669"/>
    <property type="project" value="TreeGrafter"/>
</dbReference>
<dbReference type="GO" id="GO:0009052">
    <property type="term" value="P:pentose-phosphate shunt, non-oxidative branch"/>
    <property type="evidence" value="ECO:0007669"/>
    <property type="project" value="UniProtKB-UniRule"/>
</dbReference>
<dbReference type="CDD" id="cd01398">
    <property type="entry name" value="RPI_A"/>
    <property type="match status" value="1"/>
</dbReference>
<dbReference type="FunFam" id="3.40.50.1360:FF:000001">
    <property type="entry name" value="Ribose-5-phosphate isomerase A"/>
    <property type="match status" value="1"/>
</dbReference>
<dbReference type="Gene3D" id="3.30.70.260">
    <property type="match status" value="1"/>
</dbReference>
<dbReference type="Gene3D" id="3.40.50.1360">
    <property type="match status" value="1"/>
</dbReference>
<dbReference type="HAMAP" id="MF_00170">
    <property type="entry name" value="Rib_5P_isom_A"/>
    <property type="match status" value="1"/>
</dbReference>
<dbReference type="InterPro" id="IPR037171">
    <property type="entry name" value="NagB/RpiA_transferase-like"/>
</dbReference>
<dbReference type="InterPro" id="IPR020672">
    <property type="entry name" value="Ribose5P_isomerase_typA_subgr"/>
</dbReference>
<dbReference type="InterPro" id="IPR004788">
    <property type="entry name" value="Ribose5P_isomerase_type_A"/>
</dbReference>
<dbReference type="NCBIfam" id="NF001924">
    <property type="entry name" value="PRK00702.1"/>
    <property type="match status" value="1"/>
</dbReference>
<dbReference type="NCBIfam" id="TIGR00021">
    <property type="entry name" value="rpiA"/>
    <property type="match status" value="1"/>
</dbReference>
<dbReference type="PANTHER" id="PTHR11934">
    <property type="entry name" value="RIBOSE-5-PHOSPHATE ISOMERASE"/>
    <property type="match status" value="1"/>
</dbReference>
<dbReference type="PANTHER" id="PTHR11934:SF0">
    <property type="entry name" value="RIBOSE-5-PHOSPHATE ISOMERASE"/>
    <property type="match status" value="1"/>
</dbReference>
<dbReference type="Pfam" id="PF06026">
    <property type="entry name" value="Rib_5-P_isom_A"/>
    <property type="match status" value="1"/>
</dbReference>
<dbReference type="SUPFAM" id="SSF75445">
    <property type="entry name" value="D-ribose-5-phosphate isomerase (RpiA), lid domain"/>
    <property type="match status" value="1"/>
</dbReference>
<dbReference type="SUPFAM" id="SSF100950">
    <property type="entry name" value="NagB/RpiA/CoA transferase-like"/>
    <property type="match status" value="1"/>
</dbReference>